<protein>
    <recommendedName>
        <fullName evidence="1">Acetate kinase</fullName>
        <ecNumber evidence="1">2.7.2.1</ecNumber>
    </recommendedName>
    <alternativeName>
        <fullName evidence="1">Acetokinase</fullName>
    </alternativeName>
</protein>
<proteinExistence type="inferred from homology"/>
<feature type="chain" id="PRO_1000116796" description="Acetate kinase">
    <location>
        <begin position="1"/>
        <end position="397"/>
    </location>
</feature>
<feature type="active site" description="Proton donor/acceptor" evidence="1">
    <location>
        <position position="147"/>
    </location>
</feature>
<feature type="binding site" evidence="1">
    <location>
        <position position="7"/>
    </location>
    <ligand>
        <name>Mg(2+)</name>
        <dbReference type="ChEBI" id="CHEBI:18420"/>
    </ligand>
</feature>
<feature type="binding site" evidence="1">
    <location>
        <position position="14"/>
    </location>
    <ligand>
        <name>ATP</name>
        <dbReference type="ChEBI" id="CHEBI:30616"/>
    </ligand>
</feature>
<feature type="binding site" evidence="1">
    <location>
        <position position="90"/>
    </location>
    <ligand>
        <name>substrate</name>
    </ligand>
</feature>
<feature type="binding site" evidence="1">
    <location>
        <begin position="207"/>
        <end position="211"/>
    </location>
    <ligand>
        <name>ATP</name>
        <dbReference type="ChEBI" id="CHEBI:30616"/>
    </ligand>
</feature>
<feature type="binding site" evidence="1">
    <location>
        <begin position="282"/>
        <end position="284"/>
    </location>
    <ligand>
        <name>ATP</name>
        <dbReference type="ChEBI" id="CHEBI:30616"/>
    </ligand>
</feature>
<feature type="binding site" evidence="1">
    <location>
        <begin position="330"/>
        <end position="334"/>
    </location>
    <ligand>
        <name>ATP</name>
        <dbReference type="ChEBI" id="CHEBI:30616"/>
    </ligand>
</feature>
<feature type="binding site" evidence="1">
    <location>
        <position position="383"/>
    </location>
    <ligand>
        <name>Mg(2+)</name>
        <dbReference type="ChEBI" id="CHEBI:18420"/>
    </ligand>
</feature>
<feature type="site" description="Transition state stabilizer" evidence="1">
    <location>
        <position position="179"/>
    </location>
</feature>
<feature type="site" description="Transition state stabilizer" evidence="1">
    <location>
        <position position="240"/>
    </location>
</feature>
<evidence type="ECO:0000255" key="1">
    <source>
        <dbReference type="HAMAP-Rule" id="MF_00020"/>
    </source>
</evidence>
<comment type="function">
    <text evidence="1">Catalyzes the formation of acetyl phosphate from acetate and ATP. Can also catalyze the reverse reaction.</text>
</comment>
<comment type="catalytic activity">
    <reaction evidence="1">
        <text>acetate + ATP = acetyl phosphate + ADP</text>
        <dbReference type="Rhea" id="RHEA:11352"/>
        <dbReference type="ChEBI" id="CHEBI:22191"/>
        <dbReference type="ChEBI" id="CHEBI:30089"/>
        <dbReference type="ChEBI" id="CHEBI:30616"/>
        <dbReference type="ChEBI" id="CHEBI:456216"/>
        <dbReference type="EC" id="2.7.2.1"/>
    </reaction>
</comment>
<comment type="cofactor">
    <cofactor evidence="1">
        <name>Mg(2+)</name>
        <dbReference type="ChEBI" id="CHEBI:18420"/>
    </cofactor>
    <cofactor evidence="1">
        <name>Mn(2+)</name>
        <dbReference type="ChEBI" id="CHEBI:29035"/>
    </cofactor>
    <text evidence="1">Mg(2+). Can also accept Mn(2+).</text>
</comment>
<comment type="pathway">
    <text evidence="1">Metabolic intermediate biosynthesis; acetyl-CoA biosynthesis; acetyl-CoA from acetate: step 1/2.</text>
</comment>
<comment type="subunit">
    <text evidence="1">Homodimer.</text>
</comment>
<comment type="subcellular location">
    <subcellularLocation>
        <location evidence="1">Cytoplasm</location>
    </subcellularLocation>
</comment>
<comment type="similarity">
    <text evidence="1">Belongs to the acetokinase family.</text>
</comment>
<sequence>MKILVVNCGSSSLKYQLIDMTSEEALAKGLVERIGIEGSILTQKVNGEKYIIEEPMKDHKKAIELVLKALVDKEHGVISDMSEIAAVGHRVVHGGEKYASSVLIDDEVMKALEDCVKLAPLHNPPNIIGINACRELMPKTPMVAVFDTAFHQTLPDYAYMYPLPYELYEQNGIRKYGFHGTSHRYVSSVASEMMGKDLKDLKVITCHLGNGASLCAVKEGKSVETSMGFTPLAGLAMGTRCGDIDPAILLFMERELKMSPDEVDTVINKKSGVLGISGVSSDFRDIEGAAEEGNKRAKLALDVYHYTVRQTIGAYTAVLNGVDAIVFTAGLGENSAASREEILNGLEYLGIKIDAEKNKQRGKQIEISTEDSKVKVFVIPTDEELMIARDTKEITAK</sequence>
<accession>C1FSN0</accession>
<reference key="1">
    <citation type="submission" date="2008-10" db="EMBL/GenBank/DDBJ databases">
        <title>Genome sequence of Clostridium botulinum A2 Kyoto.</title>
        <authorList>
            <person name="Shrivastava S."/>
            <person name="Brinkac L.M."/>
            <person name="Brown J.L."/>
            <person name="Bruce D."/>
            <person name="Detter C.C."/>
            <person name="Johnson E.A."/>
            <person name="Munk C.A."/>
            <person name="Smith L.A."/>
            <person name="Smith T.J."/>
            <person name="Sutton G."/>
            <person name="Brettin T.S."/>
        </authorList>
    </citation>
    <scope>NUCLEOTIDE SEQUENCE [LARGE SCALE GENOMIC DNA]</scope>
    <source>
        <strain>Kyoto / Type A2</strain>
    </source>
</reference>
<keyword id="KW-0067">ATP-binding</keyword>
<keyword id="KW-0963">Cytoplasm</keyword>
<keyword id="KW-0418">Kinase</keyword>
<keyword id="KW-0460">Magnesium</keyword>
<keyword id="KW-0479">Metal-binding</keyword>
<keyword id="KW-0547">Nucleotide-binding</keyword>
<keyword id="KW-0808">Transferase</keyword>
<gene>
    <name evidence="1" type="primary">ackA</name>
    <name type="ordered locus">CLM_2753</name>
</gene>
<organism>
    <name type="scientific">Clostridium botulinum (strain Kyoto / Type A2)</name>
    <dbReference type="NCBI Taxonomy" id="536232"/>
    <lineage>
        <taxon>Bacteria</taxon>
        <taxon>Bacillati</taxon>
        <taxon>Bacillota</taxon>
        <taxon>Clostridia</taxon>
        <taxon>Eubacteriales</taxon>
        <taxon>Clostridiaceae</taxon>
        <taxon>Clostridium</taxon>
    </lineage>
</organism>
<dbReference type="EC" id="2.7.2.1" evidence="1"/>
<dbReference type="EMBL" id="CP001581">
    <property type="protein sequence ID" value="ACO83550.1"/>
    <property type="molecule type" value="Genomic_DNA"/>
</dbReference>
<dbReference type="RefSeq" id="WP_004440287.1">
    <property type="nucleotide sequence ID" value="NC_012563.1"/>
</dbReference>
<dbReference type="SMR" id="C1FSN0"/>
<dbReference type="KEGG" id="cby:CLM_2753"/>
<dbReference type="eggNOG" id="COG0282">
    <property type="taxonomic scope" value="Bacteria"/>
</dbReference>
<dbReference type="HOGENOM" id="CLU_020352_0_1_9"/>
<dbReference type="UniPathway" id="UPA00340">
    <property type="reaction ID" value="UER00458"/>
</dbReference>
<dbReference type="Proteomes" id="UP000001374">
    <property type="component" value="Chromosome"/>
</dbReference>
<dbReference type="GO" id="GO:0005737">
    <property type="term" value="C:cytoplasm"/>
    <property type="evidence" value="ECO:0007669"/>
    <property type="project" value="UniProtKB-SubCell"/>
</dbReference>
<dbReference type="GO" id="GO:0008776">
    <property type="term" value="F:acetate kinase activity"/>
    <property type="evidence" value="ECO:0007669"/>
    <property type="project" value="UniProtKB-UniRule"/>
</dbReference>
<dbReference type="GO" id="GO:0005524">
    <property type="term" value="F:ATP binding"/>
    <property type="evidence" value="ECO:0007669"/>
    <property type="project" value="UniProtKB-KW"/>
</dbReference>
<dbReference type="GO" id="GO:0000287">
    <property type="term" value="F:magnesium ion binding"/>
    <property type="evidence" value="ECO:0007669"/>
    <property type="project" value="UniProtKB-UniRule"/>
</dbReference>
<dbReference type="GO" id="GO:0006083">
    <property type="term" value="P:acetate metabolic process"/>
    <property type="evidence" value="ECO:0007669"/>
    <property type="project" value="TreeGrafter"/>
</dbReference>
<dbReference type="GO" id="GO:0006085">
    <property type="term" value="P:acetyl-CoA biosynthetic process"/>
    <property type="evidence" value="ECO:0007669"/>
    <property type="project" value="UniProtKB-UniRule"/>
</dbReference>
<dbReference type="CDD" id="cd24010">
    <property type="entry name" value="ASKHA_NBD_AcK_PK"/>
    <property type="match status" value="1"/>
</dbReference>
<dbReference type="Gene3D" id="3.30.420.40">
    <property type="match status" value="2"/>
</dbReference>
<dbReference type="HAMAP" id="MF_00020">
    <property type="entry name" value="Acetate_kinase"/>
    <property type="match status" value="1"/>
</dbReference>
<dbReference type="InterPro" id="IPR004372">
    <property type="entry name" value="Ac/propionate_kinase"/>
</dbReference>
<dbReference type="InterPro" id="IPR000890">
    <property type="entry name" value="Aliphatic_acid_kin_short-chain"/>
</dbReference>
<dbReference type="InterPro" id="IPR023865">
    <property type="entry name" value="Aliphatic_acid_kinase_CS"/>
</dbReference>
<dbReference type="InterPro" id="IPR043129">
    <property type="entry name" value="ATPase_NBD"/>
</dbReference>
<dbReference type="NCBIfam" id="TIGR00016">
    <property type="entry name" value="ackA"/>
    <property type="match status" value="1"/>
</dbReference>
<dbReference type="PANTHER" id="PTHR21060">
    <property type="entry name" value="ACETATE KINASE"/>
    <property type="match status" value="1"/>
</dbReference>
<dbReference type="PANTHER" id="PTHR21060:SF15">
    <property type="entry name" value="ACETATE KINASE-RELATED"/>
    <property type="match status" value="1"/>
</dbReference>
<dbReference type="Pfam" id="PF00871">
    <property type="entry name" value="Acetate_kinase"/>
    <property type="match status" value="1"/>
</dbReference>
<dbReference type="PIRSF" id="PIRSF000722">
    <property type="entry name" value="Acetate_prop_kin"/>
    <property type="match status" value="1"/>
</dbReference>
<dbReference type="PRINTS" id="PR00471">
    <property type="entry name" value="ACETATEKNASE"/>
</dbReference>
<dbReference type="SUPFAM" id="SSF53067">
    <property type="entry name" value="Actin-like ATPase domain"/>
    <property type="match status" value="2"/>
</dbReference>
<dbReference type="PROSITE" id="PS01075">
    <property type="entry name" value="ACETATE_KINASE_1"/>
    <property type="match status" value="1"/>
</dbReference>
<dbReference type="PROSITE" id="PS01076">
    <property type="entry name" value="ACETATE_KINASE_2"/>
    <property type="match status" value="1"/>
</dbReference>
<name>ACKA_CLOBJ</name>